<dbReference type="EMBL" id="AF069990">
    <property type="protein sequence ID" value="AAD34207.1"/>
    <property type="molecule type" value="mRNA"/>
</dbReference>
<dbReference type="EMBL" id="AB250386">
    <property type="protein sequence ID" value="BAE95404.1"/>
    <property type="molecule type" value="mRNA"/>
</dbReference>
<dbReference type="RefSeq" id="NP_990160.1">
    <property type="nucleotide sequence ID" value="NM_204829.1"/>
</dbReference>
<dbReference type="SMR" id="Q9W676"/>
<dbReference type="FunCoup" id="Q9W676">
    <property type="interactions" value="155"/>
</dbReference>
<dbReference type="STRING" id="9031.ENSGALP00000068472"/>
<dbReference type="PaxDb" id="9031-ENSGALP00000036514"/>
<dbReference type="GeneID" id="395631"/>
<dbReference type="KEGG" id="gga:395631"/>
<dbReference type="CTD" id="9079"/>
<dbReference type="VEuPathDB" id="HostDB:geneid_395631"/>
<dbReference type="eggNOG" id="KOG2181">
    <property type="taxonomic scope" value="Eukaryota"/>
</dbReference>
<dbReference type="InParanoid" id="Q9W676"/>
<dbReference type="OrthoDB" id="774557at2759"/>
<dbReference type="PhylomeDB" id="Q9W676"/>
<dbReference type="PRO" id="PR:Q9W676"/>
<dbReference type="Proteomes" id="UP000000539">
    <property type="component" value="Unassembled WGS sequence"/>
</dbReference>
<dbReference type="GO" id="GO:0005634">
    <property type="term" value="C:nucleus"/>
    <property type="evidence" value="ECO:0000250"/>
    <property type="project" value="UniProtKB"/>
</dbReference>
<dbReference type="GO" id="GO:0005667">
    <property type="term" value="C:transcription regulator complex"/>
    <property type="evidence" value="ECO:0000318"/>
    <property type="project" value="GO_Central"/>
</dbReference>
<dbReference type="GO" id="GO:0030274">
    <property type="term" value="F:LIM domain binding"/>
    <property type="evidence" value="ECO:0000250"/>
    <property type="project" value="UniProtKB"/>
</dbReference>
<dbReference type="GO" id="GO:0003712">
    <property type="term" value="F:transcription coregulator activity"/>
    <property type="evidence" value="ECO:0000318"/>
    <property type="project" value="GO_Central"/>
</dbReference>
<dbReference type="GO" id="GO:0000122">
    <property type="term" value="P:negative regulation of transcription by RNA polymerase II"/>
    <property type="evidence" value="ECO:0000318"/>
    <property type="project" value="GO_Central"/>
</dbReference>
<dbReference type="GO" id="GO:0007399">
    <property type="term" value="P:nervous system development"/>
    <property type="evidence" value="ECO:0000318"/>
    <property type="project" value="GO_Central"/>
</dbReference>
<dbReference type="GO" id="GO:0045944">
    <property type="term" value="P:positive regulation of transcription by RNA polymerase II"/>
    <property type="evidence" value="ECO:0000318"/>
    <property type="project" value="GO_Central"/>
</dbReference>
<dbReference type="FunFam" id="2.10.110.10:FF:000063">
    <property type="entry name" value="LIM domain-binding protein 2 isoform X2"/>
    <property type="match status" value="1"/>
</dbReference>
<dbReference type="Gene3D" id="2.10.110.10">
    <property type="entry name" value="Cysteine Rich Protein"/>
    <property type="match status" value="1"/>
</dbReference>
<dbReference type="InterPro" id="IPR041363">
    <property type="entry name" value="LID"/>
</dbReference>
<dbReference type="InterPro" id="IPR029005">
    <property type="entry name" value="LIM-bd/SEUSS"/>
</dbReference>
<dbReference type="PANTHER" id="PTHR10378">
    <property type="entry name" value="LIM DOMAIN-BINDING PROTEIN"/>
    <property type="match status" value="1"/>
</dbReference>
<dbReference type="Pfam" id="PF17916">
    <property type="entry name" value="LID"/>
    <property type="match status" value="1"/>
</dbReference>
<dbReference type="Pfam" id="PF01803">
    <property type="entry name" value="LIM_bind"/>
    <property type="match status" value="1"/>
</dbReference>
<dbReference type="PROSITE" id="PS51957">
    <property type="entry name" value="LID"/>
    <property type="match status" value="1"/>
</dbReference>
<sequence length="371" mass="42607">MSSAPHDPFYSSPFGPFYRRHTPYMVQPEYRIYEMNKRLQARSEDSDNLWWDAFATEFFEDDATLTLSFCLEDGPKRYTIGRTLIPRYFSTVFEGGVTDLYYILKHSKESYHNSSITVDCDQCTMVTQHGKPMFTKVCTEGRLILEFTFDDLMRIKTWHFTIRQYRELVPRSILPMHAQDPQVLEQLSKNITRMGLTNFTLNYLRLCVILEPMQELMSRHKTYNLSPRDCLKTCLFQKWQRMVAPPAEPTRQPTTKRRKRKNSTSSTSNSSAGNNANSTNSKKKSAAANLSLSSQDVMVVGEPTLMGGEFGDEDERLITRLENTQYDAANGMDDEEDFNNSPALGNNSPWNSKPPANQETKSENPTPQASQ</sequence>
<organism>
    <name type="scientific">Gallus gallus</name>
    <name type="common">Chicken</name>
    <dbReference type="NCBI Taxonomy" id="9031"/>
    <lineage>
        <taxon>Eukaryota</taxon>
        <taxon>Metazoa</taxon>
        <taxon>Chordata</taxon>
        <taxon>Craniata</taxon>
        <taxon>Vertebrata</taxon>
        <taxon>Euteleostomi</taxon>
        <taxon>Archelosauria</taxon>
        <taxon>Archosauria</taxon>
        <taxon>Dinosauria</taxon>
        <taxon>Saurischia</taxon>
        <taxon>Theropoda</taxon>
        <taxon>Coelurosauria</taxon>
        <taxon>Aves</taxon>
        <taxon>Neognathae</taxon>
        <taxon>Galloanserae</taxon>
        <taxon>Galliformes</taxon>
        <taxon>Phasianidae</taxon>
        <taxon>Phasianinae</taxon>
        <taxon>Gallus</taxon>
    </lineage>
</organism>
<comment type="function">
    <text evidence="7">Binds to the LIM domain of a wide variety of LIM domain-containing transcription factors.</text>
</comment>
<comment type="subcellular location">
    <subcellularLocation>
        <location evidence="7">Nucleus</location>
    </subcellularLocation>
</comment>
<comment type="alternative products">
    <event type="alternative splicing"/>
    <isoform>
        <id>Q9W676-1</id>
        <name evidence="4">a</name>
        <sequence type="displayed"/>
    </isoform>
    <isoform>
        <id>Q9W676-2</id>
        <name evidence="5">b</name>
        <sequence type="described" ref="VSP_052328 VSP_052329"/>
    </isoform>
</comment>
<comment type="tissue specificity">
    <text evidence="4">First expressed at stages 15-16 in presumptive limb mesoderm. As limb outgrowth proceeds, expressed in the entire limb bud, concentrating in the distal mesoderm throughout limb development. Both hindlimbs and forelimbs exhibit similar expression patterns.</text>
</comment>
<comment type="miscellaneous">
    <molecule>Isoform b</molecule>
    <text evidence="5">Lacks LIM-binding domain.</text>
</comment>
<comment type="similarity">
    <text evidence="1">Belongs to the LDB family.</text>
</comment>
<evidence type="ECO:0000255" key="1"/>
<evidence type="ECO:0000255" key="2">
    <source>
        <dbReference type="PROSITE-ProRule" id="PRU01302"/>
    </source>
</evidence>
<evidence type="ECO:0000256" key="3">
    <source>
        <dbReference type="SAM" id="MobiDB-lite"/>
    </source>
</evidence>
<evidence type="ECO:0000269" key="4">
    <source>
    </source>
</evidence>
<evidence type="ECO:0000269" key="5">
    <source>
    </source>
</evidence>
<evidence type="ECO:0000303" key="6">
    <source>
    </source>
</evidence>
<evidence type="ECO:0000305" key="7"/>
<evidence type="ECO:0000312" key="8">
    <source>
        <dbReference type="EMBL" id="AAD34207.1"/>
    </source>
</evidence>
<evidence type="ECO:0000312" key="9">
    <source>
        <dbReference type="EMBL" id="BAE95404.1"/>
    </source>
</evidence>
<accession>Q9W676</accession>
<accession>Q1EQW9</accession>
<name>LDB2_CHICK</name>
<proteinExistence type="evidence at transcript level"/>
<keyword id="KW-0025">Alternative splicing</keyword>
<keyword id="KW-0539">Nucleus</keyword>
<keyword id="KW-1185">Reference proteome</keyword>
<protein>
    <recommendedName>
        <fullName>LIM domain-binding protein 2</fullName>
        <shortName>LDB-2</shortName>
    </recommendedName>
    <alternativeName>
        <fullName>Carboxyl-terminal LIM domain-binding protein 1</fullName>
        <shortName>CLIM-1</shortName>
    </alternativeName>
    <alternativeName>
        <fullName>LIM domain-binding factor CLIM1</fullName>
        <shortName>cLdb2</shortName>
    </alternativeName>
</protein>
<feature type="chain" id="PRO_0000284556" description="LIM domain-binding protein 2">
    <location>
        <begin position="1"/>
        <end position="371"/>
    </location>
</feature>
<feature type="domain" description="LIM interaction domain (LID)" evidence="2">
    <location>
        <begin position="296"/>
        <end position="335"/>
    </location>
</feature>
<feature type="region of interest" description="Disordered" evidence="3">
    <location>
        <begin position="244"/>
        <end position="289"/>
    </location>
</feature>
<feature type="region of interest" description="Disordered" evidence="3">
    <location>
        <begin position="325"/>
        <end position="371"/>
    </location>
</feature>
<feature type="compositionally biased region" description="Low complexity" evidence="3">
    <location>
        <begin position="263"/>
        <end position="289"/>
    </location>
</feature>
<feature type="compositionally biased region" description="Polar residues" evidence="3">
    <location>
        <begin position="339"/>
        <end position="371"/>
    </location>
</feature>
<feature type="splice variant" id="VSP_052328" description="In isoform b." evidence="6">
    <original>DVMVVGEPTLMGGEFGDEDERLITRLENTQYDAANG</original>
    <variation>VPELGALQSCSLNPGRDGALCHSTAVTPTGQFKEKH</variation>
    <location>
        <begin position="296"/>
        <end position="331"/>
    </location>
</feature>
<feature type="splice variant" id="VSP_052329" description="In isoform b." evidence="6">
    <location>
        <begin position="332"/>
        <end position="371"/>
    </location>
</feature>
<feature type="sequence conflict" description="In Ref. 2; BAE95404." evidence="7" ref="2">
    <original>P</original>
    <variation>A</variation>
    <location>
        <position position="175"/>
    </location>
</feature>
<feature type="sequence conflict" description="In Ref. 2; BAE95404." evidence="7" ref="2">
    <original>L</original>
    <variation>V</variation>
    <location>
        <position position="184"/>
    </location>
</feature>
<feature type="sequence conflict" description="In Ref. 2; BAE95404." evidence="7" ref="2">
    <location>
        <position position="247"/>
    </location>
</feature>
<reference evidence="7 8" key="1">
    <citation type="journal article" date="1999" name="Nat. Genet.">
        <title>RLIM inhibits functional activity of LIM homeodomain transcription factors via recruitment of the histone deacetylase complex.</title>
        <authorList>
            <person name="Bach I."/>
            <person name="Rodriguez-Esteban C."/>
            <person name="Carriere C."/>
            <person name="Bhushan A."/>
            <person name="Krones A."/>
            <person name="Rose D.W."/>
            <person name="Glass C.K."/>
            <person name="Andersen B."/>
            <person name="Izpisua-Belmonte J.-C."/>
            <person name="Rosenfeld M.G."/>
        </authorList>
    </citation>
    <scope>NUCLEOTIDE SEQUENCE [MRNA] (ISOFORM A)</scope>
    <scope>TISSUE SPECIFICITY</scope>
    <source>
        <tissue evidence="4">Limb</tissue>
    </source>
</reference>
<reference evidence="7 9" key="2">
    <citation type="journal article" date="2006" name="J. Biochem.">
        <title>Spliced isoforms of LIM-domain-binding protein (CLIM/NLI/Ldb) lacking the LIM-interaction domain.</title>
        <authorList>
            <person name="Tran Y.H."/>
            <person name="Xu Z."/>
            <person name="Kato A."/>
            <person name="Mistry A.C."/>
            <person name="Goya Y."/>
            <person name="Taira M."/>
            <person name="Brandt S.J."/>
            <person name="Hirose S."/>
        </authorList>
    </citation>
    <scope>NUCLEOTIDE SEQUENCE [MRNA] (ISOFORM B)</scope>
    <scope>ALTERNATIVE SPLICING</scope>
    <source>
        <tissue evidence="5">Fetus</tissue>
    </source>
</reference>
<gene>
    <name type="primary">LDB2</name>
    <name type="synonym">CLIM1</name>
</gene>